<feature type="chain" id="PRO_1000123241" description="N-acetyl-gamma-glutamyl-phosphate reductase">
    <location>
        <begin position="1"/>
        <end position="346"/>
    </location>
</feature>
<feature type="active site" evidence="1">
    <location>
        <position position="149"/>
    </location>
</feature>
<keyword id="KW-0028">Amino-acid biosynthesis</keyword>
<keyword id="KW-0055">Arginine biosynthesis</keyword>
<keyword id="KW-0963">Cytoplasm</keyword>
<keyword id="KW-0521">NADP</keyword>
<keyword id="KW-0560">Oxidoreductase</keyword>
<keyword id="KW-1185">Reference proteome</keyword>
<comment type="function">
    <text evidence="1">Catalyzes the NADPH-dependent reduction of N-acetyl-5-glutamyl phosphate to yield N-acetyl-L-glutamate 5-semialdehyde.</text>
</comment>
<comment type="catalytic activity">
    <reaction evidence="1">
        <text>N-acetyl-L-glutamate 5-semialdehyde + phosphate + NADP(+) = N-acetyl-L-glutamyl 5-phosphate + NADPH + H(+)</text>
        <dbReference type="Rhea" id="RHEA:21588"/>
        <dbReference type="ChEBI" id="CHEBI:15378"/>
        <dbReference type="ChEBI" id="CHEBI:29123"/>
        <dbReference type="ChEBI" id="CHEBI:43474"/>
        <dbReference type="ChEBI" id="CHEBI:57783"/>
        <dbReference type="ChEBI" id="CHEBI:57936"/>
        <dbReference type="ChEBI" id="CHEBI:58349"/>
        <dbReference type="EC" id="1.2.1.38"/>
    </reaction>
</comment>
<comment type="pathway">
    <text evidence="1">Amino-acid biosynthesis; L-arginine biosynthesis; N(2)-acetyl-L-ornithine from L-glutamate: step 3/4.</text>
</comment>
<comment type="subcellular location">
    <subcellularLocation>
        <location evidence="1">Cytoplasm</location>
    </subcellularLocation>
</comment>
<comment type="similarity">
    <text evidence="1">Belongs to the NAGSA dehydrogenase family. Type 1 subfamily.</text>
</comment>
<reference key="1">
    <citation type="submission" date="2009-01" db="EMBL/GenBank/DDBJ databases">
        <title>Complete sequence of Geobacter sp. FRC-32.</title>
        <authorList>
            <consortium name="US DOE Joint Genome Institute"/>
            <person name="Lucas S."/>
            <person name="Copeland A."/>
            <person name="Lapidus A."/>
            <person name="Glavina del Rio T."/>
            <person name="Dalin E."/>
            <person name="Tice H."/>
            <person name="Bruce D."/>
            <person name="Goodwin L."/>
            <person name="Pitluck S."/>
            <person name="Saunders E."/>
            <person name="Brettin T."/>
            <person name="Detter J.C."/>
            <person name="Han C."/>
            <person name="Larimer F."/>
            <person name="Land M."/>
            <person name="Hauser L."/>
            <person name="Kyrpides N."/>
            <person name="Ovchinnikova G."/>
            <person name="Kostka J."/>
            <person name="Richardson P."/>
        </authorList>
    </citation>
    <scope>NUCLEOTIDE SEQUENCE [LARGE SCALE GENOMIC DNA]</scope>
    <source>
        <strain>DSM 22248 / JCM 15807 / FRC-32</strain>
    </source>
</reference>
<accession>B9M6W2</accession>
<gene>
    <name evidence="1" type="primary">argC</name>
    <name type="ordered locus">Geob_3642</name>
</gene>
<dbReference type="EC" id="1.2.1.38" evidence="1"/>
<dbReference type="EMBL" id="CP001390">
    <property type="protein sequence ID" value="ACM21983.1"/>
    <property type="molecule type" value="Genomic_DNA"/>
</dbReference>
<dbReference type="RefSeq" id="WP_012648709.1">
    <property type="nucleotide sequence ID" value="NC_011979.1"/>
</dbReference>
<dbReference type="SMR" id="B9M6W2"/>
<dbReference type="STRING" id="316067.Geob_3642"/>
<dbReference type="KEGG" id="geo:Geob_3642"/>
<dbReference type="eggNOG" id="COG0002">
    <property type="taxonomic scope" value="Bacteria"/>
</dbReference>
<dbReference type="HOGENOM" id="CLU_006384_0_1_7"/>
<dbReference type="OrthoDB" id="9801289at2"/>
<dbReference type="UniPathway" id="UPA00068">
    <property type="reaction ID" value="UER00108"/>
</dbReference>
<dbReference type="Proteomes" id="UP000007721">
    <property type="component" value="Chromosome"/>
</dbReference>
<dbReference type="GO" id="GO:0005737">
    <property type="term" value="C:cytoplasm"/>
    <property type="evidence" value="ECO:0007669"/>
    <property type="project" value="UniProtKB-SubCell"/>
</dbReference>
<dbReference type="GO" id="GO:0003942">
    <property type="term" value="F:N-acetyl-gamma-glutamyl-phosphate reductase activity"/>
    <property type="evidence" value="ECO:0007669"/>
    <property type="project" value="UniProtKB-UniRule"/>
</dbReference>
<dbReference type="GO" id="GO:0051287">
    <property type="term" value="F:NAD binding"/>
    <property type="evidence" value="ECO:0007669"/>
    <property type="project" value="InterPro"/>
</dbReference>
<dbReference type="GO" id="GO:0070401">
    <property type="term" value="F:NADP+ binding"/>
    <property type="evidence" value="ECO:0007669"/>
    <property type="project" value="InterPro"/>
</dbReference>
<dbReference type="GO" id="GO:0006526">
    <property type="term" value="P:L-arginine biosynthetic process"/>
    <property type="evidence" value="ECO:0007669"/>
    <property type="project" value="UniProtKB-UniRule"/>
</dbReference>
<dbReference type="CDD" id="cd23934">
    <property type="entry name" value="AGPR_1_C"/>
    <property type="match status" value="1"/>
</dbReference>
<dbReference type="CDD" id="cd17895">
    <property type="entry name" value="AGPR_1_N"/>
    <property type="match status" value="1"/>
</dbReference>
<dbReference type="FunFam" id="3.30.360.10:FF:000014">
    <property type="entry name" value="N-acetyl-gamma-glutamyl-phosphate reductase"/>
    <property type="match status" value="1"/>
</dbReference>
<dbReference type="Gene3D" id="3.30.360.10">
    <property type="entry name" value="Dihydrodipicolinate Reductase, domain 2"/>
    <property type="match status" value="1"/>
</dbReference>
<dbReference type="Gene3D" id="3.40.50.720">
    <property type="entry name" value="NAD(P)-binding Rossmann-like Domain"/>
    <property type="match status" value="1"/>
</dbReference>
<dbReference type="HAMAP" id="MF_00150">
    <property type="entry name" value="ArgC_type1"/>
    <property type="match status" value="1"/>
</dbReference>
<dbReference type="InterPro" id="IPR023013">
    <property type="entry name" value="AGPR_AS"/>
</dbReference>
<dbReference type="InterPro" id="IPR000706">
    <property type="entry name" value="AGPR_type-1"/>
</dbReference>
<dbReference type="InterPro" id="IPR036291">
    <property type="entry name" value="NAD(P)-bd_dom_sf"/>
</dbReference>
<dbReference type="InterPro" id="IPR050085">
    <property type="entry name" value="NAGSA_dehydrogenase"/>
</dbReference>
<dbReference type="InterPro" id="IPR000534">
    <property type="entry name" value="Semialdehyde_DH_NAD-bd"/>
</dbReference>
<dbReference type="NCBIfam" id="TIGR01850">
    <property type="entry name" value="argC"/>
    <property type="match status" value="1"/>
</dbReference>
<dbReference type="PANTHER" id="PTHR32338:SF10">
    <property type="entry name" value="N-ACETYL-GAMMA-GLUTAMYL-PHOSPHATE REDUCTASE, CHLOROPLASTIC-RELATED"/>
    <property type="match status" value="1"/>
</dbReference>
<dbReference type="PANTHER" id="PTHR32338">
    <property type="entry name" value="N-ACETYL-GAMMA-GLUTAMYL-PHOSPHATE REDUCTASE, CHLOROPLASTIC-RELATED-RELATED"/>
    <property type="match status" value="1"/>
</dbReference>
<dbReference type="Pfam" id="PF01118">
    <property type="entry name" value="Semialdhyde_dh"/>
    <property type="match status" value="1"/>
</dbReference>
<dbReference type="Pfam" id="PF22698">
    <property type="entry name" value="Semialdhyde_dhC_1"/>
    <property type="match status" value="1"/>
</dbReference>
<dbReference type="SMART" id="SM00859">
    <property type="entry name" value="Semialdhyde_dh"/>
    <property type="match status" value="1"/>
</dbReference>
<dbReference type="SUPFAM" id="SSF55347">
    <property type="entry name" value="Glyceraldehyde-3-phosphate dehydrogenase-like, C-terminal domain"/>
    <property type="match status" value="1"/>
</dbReference>
<dbReference type="SUPFAM" id="SSF51735">
    <property type="entry name" value="NAD(P)-binding Rossmann-fold domains"/>
    <property type="match status" value="1"/>
</dbReference>
<dbReference type="PROSITE" id="PS01224">
    <property type="entry name" value="ARGC"/>
    <property type="match status" value="1"/>
</dbReference>
<organism>
    <name type="scientific">Geotalea daltonii (strain DSM 22248 / JCM 15807 / FRC-32)</name>
    <name type="common">Geobacter daltonii</name>
    <dbReference type="NCBI Taxonomy" id="316067"/>
    <lineage>
        <taxon>Bacteria</taxon>
        <taxon>Pseudomonadati</taxon>
        <taxon>Thermodesulfobacteriota</taxon>
        <taxon>Desulfuromonadia</taxon>
        <taxon>Geobacterales</taxon>
        <taxon>Geobacteraceae</taxon>
        <taxon>Geotalea</taxon>
    </lineage>
</organism>
<sequence>MLKVAIVGASGYTGIELLRLLHGHPEVSVTCVTSEQSAGKNVAEIFPTLRSRYNLVLENLEPVRIAERADFIFTALPHKAAMEVVPTFLKLGKRVVDLSADYRLHDAREYAAWYEPHMNPELLKEAIYGLPELRREKIAEADLVANPGCYPTSIILGLAPLLKKKLVNPATIIADAKSGVSGAGRSAKVDNLYCEVNDGFKAYGVGGVHRHIPEIEQELSLLAGKQLTITFTPHLVPMDRGILSTIYAEPAGEVSLAGLVELYRDFYHGEAFVRVLPENNFPSTAFVRGSNFCDIGLTVDKRTGRIVIVSAIDNLIKGASGQAIQNMNIMNGFPENLGLESLGLFP</sequence>
<evidence type="ECO:0000255" key="1">
    <source>
        <dbReference type="HAMAP-Rule" id="MF_00150"/>
    </source>
</evidence>
<proteinExistence type="inferred from homology"/>
<protein>
    <recommendedName>
        <fullName evidence="1">N-acetyl-gamma-glutamyl-phosphate reductase</fullName>
        <shortName evidence="1">AGPR</shortName>
        <ecNumber evidence="1">1.2.1.38</ecNumber>
    </recommendedName>
    <alternativeName>
        <fullName evidence="1">N-acetyl-glutamate semialdehyde dehydrogenase</fullName>
        <shortName evidence="1">NAGSA dehydrogenase</shortName>
    </alternativeName>
</protein>
<name>ARGC_GEODF</name>